<evidence type="ECO:0000250" key="1">
    <source>
        <dbReference type="UniProtKB" id="Q4KGU2"/>
    </source>
</evidence>
<evidence type="ECO:0000269" key="2">
    <source>
    </source>
</evidence>
<evidence type="ECO:0000303" key="3">
    <source>
    </source>
</evidence>
<evidence type="ECO:0000305" key="4"/>
<evidence type="ECO:0000312" key="5">
    <source>
        <dbReference type="EMBL" id="ABO24229.1"/>
    </source>
</evidence>
<protein>
    <recommendedName>
        <fullName evidence="3">4-hydroxyproline 2-epimerase</fullName>
        <shortName>4Hyp 2-epimerase</shortName>
        <shortName evidence="3">4HypE</shortName>
        <ecNumber evidence="2">5.1.1.8</ecNumber>
    </recommendedName>
</protein>
<accession>A3QFI1</accession>
<name>4HYPE_SHELP</name>
<feature type="chain" id="PRO_0000432275" description="4-hydroxyproline 2-epimerase">
    <location>
        <begin position="1"/>
        <end position="333"/>
    </location>
</feature>
<feature type="active site" description="Proton acceptor" evidence="1">
    <location>
        <position position="90"/>
    </location>
</feature>
<feature type="active site" description="Proton donor" evidence="1">
    <location>
        <position position="253"/>
    </location>
</feature>
<feature type="binding site" evidence="1">
    <location>
        <begin position="91"/>
        <end position="92"/>
    </location>
    <ligand>
        <name>substrate</name>
    </ligand>
</feature>
<feature type="binding site" evidence="1">
    <location>
        <position position="223"/>
    </location>
    <ligand>
        <name>substrate</name>
    </ligand>
</feature>
<feature type="binding site" evidence="1">
    <location>
        <position position="249"/>
    </location>
    <ligand>
        <name>substrate</name>
    </ligand>
</feature>
<feature type="binding site" evidence="1">
    <location>
        <begin position="254"/>
        <end position="255"/>
    </location>
    <ligand>
        <name>substrate</name>
    </ligand>
</feature>
<sequence length="333" mass="36112">MLKGTFFCVDAHTCGNPVRLVTSGHPDLKGRTMSEKRQDFLAQYDWIRKALMFEPRGHDMMSGAFLYPPCSDNADAAILFIETSGCLPMCGHGTIGTITAALESGLLTPKMPGQLTIDVPAGQIKVQYQQTGAKVDWVKIFNVPAYLAHKDVVLDIPGLGPLKIDVSYGGNYYAIVDPQANFPGLRHWSAGDILRWSPIVREVAHRELNCVHPDDPTVNGVSHVLWTGDTISEGSNGANAVFYGDKAIDRSPCGTGTSARLAQLYSRGELKVGDEYTHESIIGSQFVGRIEAATKVGAFDAIMPSIKGWARITGHNAITVDDNDPYAFGFQVV</sequence>
<keyword id="KW-0413">Isomerase</keyword>
<keyword id="KW-1185">Reference proteome</keyword>
<reference key="1">
    <citation type="submission" date="2007-03" db="EMBL/GenBank/DDBJ databases">
        <title>Complete sequence of Shewanella loihica PV-4.</title>
        <authorList>
            <consortium name="US DOE Joint Genome Institute"/>
            <person name="Copeland A."/>
            <person name="Lucas S."/>
            <person name="Lapidus A."/>
            <person name="Barry K."/>
            <person name="Detter J.C."/>
            <person name="Glavina del Rio T."/>
            <person name="Hammon N."/>
            <person name="Israni S."/>
            <person name="Dalin E."/>
            <person name="Tice H."/>
            <person name="Pitluck S."/>
            <person name="Chain P."/>
            <person name="Malfatti S."/>
            <person name="Shin M."/>
            <person name="Vergez L."/>
            <person name="Schmutz J."/>
            <person name="Larimer F."/>
            <person name="Land M."/>
            <person name="Hauser L."/>
            <person name="Kyrpides N."/>
            <person name="Mikhailova N."/>
            <person name="Romine M.F."/>
            <person name="Serres G."/>
            <person name="Fredrickson J."/>
            <person name="Tiedje J."/>
            <person name="Richardson P."/>
        </authorList>
    </citation>
    <scope>NUCLEOTIDE SEQUENCE [LARGE SCALE GENOMIC DNA]</scope>
    <source>
        <strain>ATCC BAA-1088 / PV-4</strain>
    </source>
</reference>
<reference key="2">
    <citation type="journal article" date="2014" name="Elife">
        <title>Prediction and characterization of enzymatic activities guided by sequence similarity and genome neighborhood networks.</title>
        <authorList>
            <person name="Zhao S."/>
            <person name="Sakai A."/>
            <person name="Zhang X."/>
            <person name="Vetting M.W."/>
            <person name="Kumar R."/>
            <person name="Hillerich B."/>
            <person name="San Francisco B."/>
            <person name="Solbiati J."/>
            <person name="Steves A."/>
            <person name="Brown S."/>
            <person name="Akiva E."/>
            <person name="Barber A."/>
            <person name="Seidel R.D."/>
            <person name="Babbitt P.C."/>
            <person name="Almo S.C."/>
            <person name="Gerlt J.A."/>
            <person name="Jacobson M.P."/>
        </authorList>
    </citation>
    <scope>FUNCTION</scope>
    <scope>CATALYTIC ACTIVITY</scope>
    <scope>BIOPHYSICOCHEMICAL PROPERTIES</scope>
</reference>
<proteinExistence type="evidence at protein level"/>
<comment type="function">
    <text evidence="2">Catalyzes the epimerization of trans-4-hydroxy-L-proline (t4LHyp) to cis-4-hydroxy-D-proline (c4DHyp). Is likely involved in a degradation pathway that converts t4LHyp to alpha-ketoglutarate. Displays no proline racemase activity.</text>
</comment>
<comment type="catalytic activity">
    <reaction evidence="2">
        <text>trans-4-hydroxy-L-proline = cis-4-hydroxy-D-proline</text>
        <dbReference type="Rhea" id="RHEA:21152"/>
        <dbReference type="ChEBI" id="CHEBI:57690"/>
        <dbReference type="ChEBI" id="CHEBI:58375"/>
        <dbReference type="EC" id="5.1.1.8"/>
    </reaction>
</comment>
<comment type="biophysicochemical properties">
    <kinetics>
        <KM evidence="2">12 mM for trans-4-hydroxy-L-proline</KM>
        <text evidence="2">kcat is 50 sec(-1).</text>
    </kinetics>
</comment>
<comment type="similarity">
    <text evidence="4">Belongs to the proline racemase family.</text>
</comment>
<gene>
    <name evidence="5" type="ordered locus">Shew_2363</name>
</gene>
<organism>
    <name type="scientific">Shewanella loihica (strain ATCC BAA-1088 / PV-4)</name>
    <dbReference type="NCBI Taxonomy" id="323850"/>
    <lineage>
        <taxon>Bacteria</taxon>
        <taxon>Pseudomonadati</taxon>
        <taxon>Pseudomonadota</taxon>
        <taxon>Gammaproteobacteria</taxon>
        <taxon>Alteromonadales</taxon>
        <taxon>Shewanellaceae</taxon>
        <taxon>Shewanella</taxon>
    </lineage>
</organism>
<dbReference type="EC" id="5.1.1.8" evidence="2"/>
<dbReference type="EMBL" id="CP000606">
    <property type="protein sequence ID" value="ABO24229.1"/>
    <property type="molecule type" value="Genomic_DNA"/>
</dbReference>
<dbReference type="RefSeq" id="WP_011866160.1">
    <property type="nucleotide sequence ID" value="NC_009092.1"/>
</dbReference>
<dbReference type="SMR" id="A3QFI1"/>
<dbReference type="STRING" id="323850.Shew_2363"/>
<dbReference type="KEGG" id="slo:Shew_2363"/>
<dbReference type="eggNOG" id="COG3938">
    <property type="taxonomic scope" value="Bacteria"/>
</dbReference>
<dbReference type="HOGENOM" id="CLU_036729_0_0_6"/>
<dbReference type="OrthoDB" id="181267at2"/>
<dbReference type="SABIO-RK" id="A3QFI1"/>
<dbReference type="Proteomes" id="UP000001558">
    <property type="component" value="Chromosome"/>
</dbReference>
<dbReference type="GO" id="GO:0047580">
    <property type="term" value="F:4-hydroxyproline epimerase activity"/>
    <property type="evidence" value="ECO:0000314"/>
    <property type="project" value="CACAO"/>
</dbReference>
<dbReference type="FunFam" id="3.10.310.10:FF:000005">
    <property type="entry name" value="Proline racemase"/>
    <property type="match status" value="1"/>
</dbReference>
<dbReference type="Gene3D" id="3.10.310.10">
    <property type="entry name" value="Diaminopimelate Epimerase, Chain A, domain 1"/>
    <property type="match status" value="2"/>
</dbReference>
<dbReference type="InterPro" id="IPR008794">
    <property type="entry name" value="Pro_racemase_fam"/>
</dbReference>
<dbReference type="NCBIfam" id="NF010578">
    <property type="entry name" value="PRK13971.1"/>
    <property type="match status" value="1"/>
</dbReference>
<dbReference type="PANTHER" id="PTHR33442:SF5">
    <property type="entry name" value="BIFUNCTIONAL TRANS-3-HYDROXY-L-PROLINE DEHYDRATASE_2-EPIMERASE"/>
    <property type="match status" value="1"/>
</dbReference>
<dbReference type="PANTHER" id="PTHR33442">
    <property type="entry name" value="TRANS-3-HYDROXY-L-PROLINE DEHYDRATASE"/>
    <property type="match status" value="1"/>
</dbReference>
<dbReference type="Pfam" id="PF05544">
    <property type="entry name" value="Pro_racemase"/>
    <property type="match status" value="1"/>
</dbReference>
<dbReference type="PIRSF" id="PIRSF029792">
    <property type="entry name" value="Pro_racemase"/>
    <property type="match status" value="1"/>
</dbReference>
<dbReference type="SFLD" id="SFLDS00028">
    <property type="entry name" value="Proline_Racemase"/>
    <property type="match status" value="1"/>
</dbReference>
<dbReference type="SUPFAM" id="SSF54506">
    <property type="entry name" value="Diaminopimelate epimerase-like"/>
    <property type="match status" value="1"/>
</dbReference>